<protein>
    <recommendedName>
        <fullName evidence="1">Large ribosomal subunit protein bL20</fullName>
    </recommendedName>
    <alternativeName>
        <fullName evidence="2">50S ribosomal protein L20</fullName>
    </alternativeName>
</protein>
<name>RL20_RHIEC</name>
<feature type="chain" id="PRO_0000243722" description="Large ribosomal subunit protein bL20">
    <location>
        <begin position="1"/>
        <end position="134"/>
    </location>
</feature>
<sequence length="134" mass="15062">MARVKRGVAAHAKHKKVLKAAKGFYGRRKNTIRTAKAAVDRAKQYAYRDRKVNKRNFRALWIQRINAAVREFGLTYGRFIDGLNKAGIEVDRKVLSDMAIHEPEAFGALVAAAKKALEYLKETGTANEFEGAVR</sequence>
<evidence type="ECO:0000255" key="1">
    <source>
        <dbReference type="HAMAP-Rule" id="MF_00382"/>
    </source>
</evidence>
<evidence type="ECO:0000305" key="2"/>
<comment type="function">
    <text evidence="1">Binds directly to 23S ribosomal RNA and is necessary for the in vitro assembly process of the 50S ribosomal subunit. It is not involved in the protein synthesizing functions of that subunit.</text>
</comment>
<comment type="similarity">
    <text evidence="1">Belongs to the bacterial ribosomal protein bL20 family.</text>
</comment>
<gene>
    <name evidence="1" type="primary">rplT</name>
    <name type="ordered locus">RHE_CH00262</name>
</gene>
<proteinExistence type="inferred from homology"/>
<reference key="1">
    <citation type="journal article" date="2006" name="Proc. Natl. Acad. Sci. U.S.A.">
        <title>The partitioned Rhizobium etli genome: genetic and metabolic redundancy in seven interacting replicons.</title>
        <authorList>
            <person name="Gonzalez V."/>
            <person name="Santamaria R.I."/>
            <person name="Bustos P."/>
            <person name="Hernandez-Gonzalez I."/>
            <person name="Medrano-Soto A."/>
            <person name="Moreno-Hagelsieb G."/>
            <person name="Janga S.C."/>
            <person name="Ramirez M.A."/>
            <person name="Jimenez-Jacinto V."/>
            <person name="Collado-Vides J."/>
            <person name="Davila G."/>
        </authorList>
    </citation>
    <scope>NUCLEOTIDE SEQUENCE [LARGE SCALE GENOMIC DNA]</scope>
    <source>
        <strain>ATCC 51251 / DSM 11541 / JCM 21823 / NBRC 15573 / CFN 42</strain>
    </source>
</reference>
<organism>
    <name type="scientific">Rhizobium etli (strain ATCC 51251 / DSM 11541 / JCM 21823 / NBRC 15573 / CFN 42)</name>
    <dbReference type="NCBI Taxonomy" id="347834"/>
    <lineage>
        <taxon>Bacteria</taxon>
        <taxon>Pseudomonadati</taxon>
        <taxon>Pseudomonadota</taxon>
        <taxon>Alphaproteobacteria</taxon>
        <taxon>Hyphomicrobiales</taxon>
        <taxon>Rhizobiaceae</taxon>
        <taxon>Rhizobium/Agrobacterium group</taxon>
        <taxon>Rhizobium</taxon>
    </lineage>
</organism>
<dbReference type="EMBL" id="CP000133">
    <property type="protein sequence ID" value="ABC89085.1"/>
    <property type="molecule type" value="Genomic_DNA"/>
</dbReference>
<dbReference type="RefSeq" id="WP_011423647.1">
    <property type="nucleotide sequence ID" value="NC_007761.1"/>
</dbReference>
<dbReference type="SMR" id="Q2KDK1"/>
<dbReference type="KEGG" id="ret:RHE_CH00262"/>
<dbReference type="eggNOG" id="COG0292">
    <property type="taxonomic scope" value="Bacteria"/>
</dbReference>
<dbReference type="HOGENOM" id="CLU_123265_0_1_5"/>
<dbReference type="OrthoDB" id="9808966at2"/>
<dbReference type="Proteomes" id="UP000001936">
    <property type="component" value="Chromosome"/>
</dbReference>
<dbReference type="GO" id="GO:1990904">
    <property type="term" value="C:ribonucleoprotein complex"/>
    <property type="evidence" value="ECO:0007669"/>
    <property type="project" value="UniProtKB-KW"/>
</dbReference>
<dbReference type="GO" id="GO:0005840">
    <property type="term" value="C:ribosome"/>
    <property type="evidence" value="ECO:0007669"/>
    <property type="project" value="UniProtKB-KW"/>
</dbReference>
<dbReference type="GO" id="GO:0019843">
    <property type="term" value="F:rRNA binding"/>
    <property type="evidence" value="ECO:0007669"/>
    <property type="project" value="UniProtKB-UniRule"/>
</dbReference>
<dbReference type="GO" id="GO:0003735">
    <property type="term" value="F:structural constituent of ribosome"/>
    <property type="evidence" value="ECO:0007669"/>
    <property type="project" value="InterPro"/>
</dbReference>
<dbReference type="GO" id="GO:0000027">
    <property type="term" value="P:ribosomal large subunit assembly"/>
    <property type="evidence" value="ECO:0007669"/>
    <property type="project" value="UniProtKB-UniRule"/>
</dbReference>
<dbReference type="GO" id="GO:0006412">
    <property type="term" value="P:translation"/>
    <property type="evidence" value="ECO:0007669"/>
    <property type="project" value="InterPro"/>
</dbReference>
<dbReference type="CDD" id="cd07026">
    <property type="entry name" value="Ribosomal_L20"/>
    <property type="match status" value="1"/>
</dbReference>
<dbReference type="FunFam" id="1.10.1900.20:FF:000001">
    <property type="entry name" value="50S ribosomal protein L20"/>
    <property type="match status" value="1"/>
</dbReference>
<dbReference type="Gene3D" id="6.10.160.10">
    <property type="match status" value="1"/>
</dbReference>
<dbReference type="Gene3D" id="1.10.1900.20">
    <property type="entry name" value="Ribosomal protein L20"/>
    <property type="match status" value="1"/>
</dbReference>
<dbReference type="HAMAP" id="MF_00382">
    <property type="entry name" value="Ribosomal_bL20"/>
    <property type="match status" value="1"/>
</dbReference>
<dbReference type="InterPro" id="IPR005813">
    <property type="entry name" value="Ribosomal_bL20"/>
</dbReference>
<dbReference type="InterPro" id="IPR049946">
    <property type="entry name" value="RIBOSOMAL_L20_CS"/>
</dbReference>
<dbReference type="InterPro" id="IPR035566">
    <property type="entry name" value="Ribosomal_protein_bL20_C"/>
</dbReference>
<dbReference type="NCBIfam" id="TIGR01032">
    <property type="entry name" value="rplT_bact"/>
    <property type="match status" value="1"/>
</dbReference>
<dbReference type="PANTHER" id="PTHR10986">
    <property type="entry name" value="39S RIBOSOMAL PROTEIN L20"/>
    <property type="match status" value="1"/>
</dbReference>
<dbReference type="Pfam" id="PF00453">
    <property type="entry name" value="Ribosomal_L20"/>
    <property type="match status" value="1"/>
</dbReference>
<dbReference type="PRINTS" id="PR00062">
    <property type="entry name" value="RIBOSOMALL20"/>
</dbReference>
<dbReference type="SUPFAM" id="SSF74731">
    <property type="entry name" value="Ribosomal protein L20"/>
    <property type="match status" value="1"/>
</dbReference>
<dbReference type="PROSITE" id="PS00937">
    <property type="entry name" value="RIBOSOMAL_L20"/>
    <property type="match status" value="1"/>
</dbReference>
<keyword id="KW-1185">Reference proteome</keyword>
<keyword id="KW-0687">Ribonucleoprotein</keyword>
<keyword id="KW-0689">Ribosomal protein</keyword>
<keyword id="KW-0694">RNA-binding</keyword>
<keyword id="KW-0699">rRNA-binding</keyword>
<accession>Q2KDK1</accession>